<evidence type="ECO:0000250" key="1"/>
<evidence type="ECO:0000256" key="2">
    <source>
        <dbReference type="SAM" id="MobiDB-lite"/>
    </source>
</evidence>
<evidence type="ECO:0000269" key="3">
    <source>
    </source>
</evidence>
<evidence type="ECO:0000305" key="4"/>
<feature type="initiator methionine" description="Removed; by host" evidence="4">
    <location>
        <position position="1"/>
    </location>
</feature>
<feature type="chain" id="PRO_0000109552" description="F protein">
    <location>
        <begin position="2"/>
        <end position="162"/>
    </location>
</feature>
<feature type="region of interest" description="Disordered" evidence="2">
    <location>
        <begin position="1"/>
        <end position="23"/>
    </location>
</feature>
<feature type="compositionally biased region" description="Polar residues" evidence="2">
    <location>
        <begin position="13"/>
        <end position="23"/>
    </location>
</feature>
<name>F_HCV1</name>
<accession>P0C044</accession>
<comment type="subcellular location">
    <subcellularLocation>
        <location evidence="1">Host cytoplasm</location>
    </subcellularLocation>
    <subcellularLocation>
        <location evidence="1">Host cytoplasm</location>
        <location evidence="1">Host perinuclear region</location>
    </subcellularLocation>
</comment>
<comment type="alternative products">
    <event type="ribosomal frameshifting"/>
    <isoform>
        <id>P0C044-1</id>
        <name>F protein</name>
        <name>Frameshifted protein</name>
        <sequence type="displayed"/>
    </isoform>
    <isoform>
        <id>P26664-1</id>
        <name>Genome polyprotein</name>
        <sequence type="external"/>
    </isoform>
    <text evidence="3">The exact location of the ribosomal frameshift is unknown. The F protein seems to be generated by a -2 ribosomal frameshift located in the vicinity of codon 11 of the core protein coding sequence. However, some F proteins may also be generated by +1 ribosomal frameshift. Since the core gene encodes alternative reading frame proteins (ARFPs), many functions depicted for the core protein might belong to the ARFPs.</text>
</comment>
<comment type="miscellaneous">
    <text evidence="1">This protein is very unstable.</text>
</comment>
<comment type="miscellaneous">
    <molecule>Isoform F protein</molecule>
    <text>Produced by ribosomal frameshifting.</text>
</comment>
<protein>
    <recommendedName>
        <fullName>F protein</fullName>
    </recommendedName>
    <alternativeName>
        <fullName>Alternate reading frame protein/F-protein</fullName>
        <shortName>ARFP/F</shortName>
    </alternativeName>
    <alternativeName>
        <fullName>Frameshifted protein</fullName>
    </alternativeName>
    <alternativeName>
        <fullName>p16</fullName>
    </alternativeName>
    <alternativeName>
        <fullName>p17</fullName>
    </alternativeName>
</protein>
<dbReference type="EMBL" id="M62321">
    <property type="status" value="NOT_ANNOTATED_CDS"/>
    <property type="molecule type" value="Genomic_RNA"/>
</dbReference>
<dbReference type="euHCVdb" id="M62321"/>
<dbReference type="Proteomes" id="UP000007410">
    <property type="component" value="Segment"/>
</dbReference>
<dbReference type="GO" id="GO:0044220">
    <property type="term" value="C:host cell perinuclear region of cytoplasm"/>
    <property type="evidence" value="ECO:0007669"/>
    <property type="project" value="UniProtKB-SubCell"/>
</dbReference>
<dbReference type="GO" id="GO:0019028">
    <property type="term" value="C:viral capsid"/>
    <property type="evidence" value="ECO:0007669"/>
    <property type="project" value="InterPro"/>
</dbReference>
<dbReference type="GO" id="GO:0005198">
    <property type="term" value="F:structural molecule activity"/>
    <property type="evidence" value="ECO:0007669"/>
    <property type="project" value="InterPro"/>
</dbReference>
<dbReference type="GO" id="GO:0075523">
    <property type="term" value="P:viral translational frameshifting"/>
    <property type="evidence" value="ECO:0007669"/>
    <property type="project" value="UniProtKB-KW"/>
</dbReference>
<dbReference type="InterPro" id="IPR002522">
    <property type="entry name" value="HCV_core_N"/>
</dbReference>
<dbReference type="Pfam" id="PF01543">
    <property type="entry name" value="HCV_capsid"/>
    <property type="match status" value="1"/>
</dbReference>
<reference key="1">
    <citation type="journal article" date="1991" name="Proc. Natl. Acad. Sci. U.S.A.">
        <title>Genetic organization and diversity of the hepatitis C virus.</title>
        <authorList>
            <person name="Choo Q.-L."/>
            <person name="Richman K.H."/>
            <person name="Han J.H."/>
            <person name="Berger K."/>
            <person name="Lee C."/>
            <person name="Dong C."/>
            <person name="Gallegos C."/>
            <person name="Coit D."/>
            <person name="Medina-Selby A."/>
            <person name="Barr P.J."/>
            <person name="Weiner A.J."/>
            <person name="Bradley D.W."/>
            <person name="Kuo G."/>
            <person name="Houghton M."/>
        </authorList>
    </citation>
    <scope>NUCLEOTIDE SEQUENCE [GENOMIC RNA]</scope>
</reference>
<reference key="2">
    <citation type="journal article" date="2001" name="EMBO J.">
        <title>Synthesis of a novel hepatitis C virus protein by ribosomal frameshift.</title>
        <authorList>
            <person name="Xu Z."/>
            <person name="Choi J."/>
            <person name="Yen T.S.B."/>
            <person name="Lu W."/>
            <person name="Strohecker A."/>
            <person name="Govindarajan S."/>
            <person name="Chien D."/>
            <person name="Selby M.J."/>
            <person name="Ou J.-H."/>
        </authorList>
    </citation>
    <scope>RIBOSOMAL FRAMESHIFT</scope>
    <scope>N-TERMINUS</scope>
</reference>
<reference key="3">
    <citation type="journal article" date="2005" name="Semin. Liver Dis.">
        <title>The hepatitis C virus alternate reading frame (ARF) and its family of novel products: the alternate reading frame protein/F-protein, the double-frameshift protein, and others.</title>
        <authorList>
            <person name="Branch A.D."/>
            <person name="Stump D.D."/>
            <person name="Gutierrez J.A."/>
            <person name="Eng F."/>
            <person name="Walewski J.L."/>
        </authorList>
    </citation>
    <scope>REVIEW</scope>
</reference>
<sequence length="162" mass="17002">MSTNPKPQKKKTNVTPTVAHRTSSSRVAVRSLVEFTCCRAGALDWVCARRERLPSGRNLEVDVSLSPRLVGPRAGPGLSPGTLGPSMAMRAAGGRDGSCLPVALGLAGAPQTPGVGRAIWVRSSIPLRAASPTSWGTYRSSAPLLEALPGPWRMASGFWKTA</sequence>
<keyword id="KW-1035">Host cytoplasm</keyword>
<keyword id="KW-0688">Ribosomal frameshifting</keyword>
<organism>
    <name type="scientific">Hepatitis C virus genotype 1a (isolate 1)</name>
    <name type="common">HCV</name>
    <dbReference type="NCBI Taxonomy" id="11104"/>
    <lineage>
        <taxon>Viruses</taxon>
        <taxon>Riboviria</taxon>
        <taxon>Orthornavirae</taxon>
        <taxon>Kitrinoviricota</taxon>
        <taxon>Flasuviricetes</taxon>
        <taxon>Amarillovirales</taxon>
        <taxon>Flaviviridae</taxon>
        <taxon>Hepacivirus</taxon>
        <taxon>Hepacivirus hominis</taxon>
        <taxon>hepatitis C virus genotype 1a</taxon>
    </lineage>
</organism>
<organismHost>
    <name type="scientific">Homo sapiens</name>
    <name type="common">Human</name>
    <dbReference type="NCBI Taxonomy" id="9606"/>
</organismHost>
<proteinExistence type="inferred from homology"/>